<gene>
    <name type="primary">mtrfr</name>
    <name type="ORF">si:ch211-275j6.5</name>
</gene>
<proteinExistence type="inferred from homology"/>
<sequence>MTLFFSHRLFTVWRLKCGVMDIGWPSVLPAAGKKYQIELPVVHEEELEEQFVRGSGPGGQATNKTSNCVVLRHIPSGIVVKCHETRSVDLNRKRAREILREKLEVAYKGEESELLKMKKESMQKKQDKRRKVNENIEKKRRFKEMLNSKQEDDKST</sequence>
<protein>
    <recommendedName>
        <fullName evidence="5">Mitochondrial translation release factor in rescue</fullName>
    </recommendedName>
</protein>
<accession>A5WUX7</accession>
<accession>A5WUX8</accession>
<reference key="1">
    <citation type="journal article" date="2013" name="Nature">
        <title>The zebrafish reference genome sequence and its relationship to the human genome.</title>
        <authorList>
            <person name="Howe K."/>
            <person name="Clark M.D."/>
            <person name="Torroja C.F."/>
            <person name="Torrance J."/>
            <person name="Berthelot C."/>
            <person name="Muffato M."/>
            <person name="Collins J.E."/>
            <person name="Humphray S."/>
            <person name="McLaren K."/>
            <person name="Matthews L."/>
            <person name="McLaren S."/>
            <person name="Sealy I."/>
            <person name="Caccamo M."/>
            <person name="Churcher C."/>
            <person name="Scott C."/>
            <person name="Barrett J.C."/>
            <person name="Koch R."/>
            <person name="Rauch G.J."/>
            <person name="White S."/>
            <person name="Chow W."/>
            <person name="Kilian B."/>
            <person name="Quintais L.T."/>
            <person name="Guerra-Assuncao J.A."/>
            <person name="Zhou Y."/>
            <person name="Gu Y."/>
            <person name="Yen J."/>
            <person name="Vogel J.H."/>
            <person name="Eyre T."/>
            <person name="Redmond S."/>
            <person name="Banerjee R."/>
            <person name="Chi J."/>
            <person name="Fu B."/>
            <person name="Langley E."/>
            <person name="Maguire S.F."/>
            <person name="Laird G.K."/>
            <person name="Lloyd D."/>
            <person name="Kenyon E."/>
            <person name="Donaldson S."/>
            <person name="Sehra H."/>
            <person name="Almeida-King J."/>
            <person name="Loveland J."/>
            <person name="Trevanion S."/>
            <person name="Jones M."/>
            <person name="Quail M."/>
            <person name="Willey D."/>
            <person name="Hunt A."/>
            <person name="Burton J."/>
            <person name="Sims S."/>
            <person name="McLay K."/>
            <person name="Plumb B."/>
            <person name="Davis J."/>
            <person name="Clee C."/>
            <person name="Oliver K."/>
            <person name="Clark R."/>
            <person name="Riddle C."/>
            <person name="Elliot D."/>
            <person name="Threadgold G."/>
            <person name="Harden G."/>
            <person name="Ware D."/>
            <person name="Begum S."/>
            <person name="Mortimore B."/>
            <person name="Kerry G."/>
            <person name="Heath P."/>
            <person name="Phillimore B."/>
            <person name="Tracey A."/>
            <person name="Corby N."/>
            <person name="Dunn M."/>
            <person name="Johnson C."/>
            <person name="Wood J."/>
            <person name="Clark S."/>
            <person name="Pelan S."/>
            <person name="Griffiths G."/>
            <person name="Smith M."/>
            <person name="Glithero R."/>
            <person name="Howden P."/>
            <person name="Barker N."/>
            <person name="Lloyd C."/>
            <person name="Stevens C."/>
            <person name="Harley J."/>
            <person name="Holt K."/>
            <person name="Panagiotidis G."/>
            <person name="Lovell J."/>
            <person name="Beasley H."/>
            <person name="Henderson C."/>
            <person name="Gordon D."/>
            <person name="Auger K."/>
            <person name="Wright D."/>
            <person name="Collins J."/>
            <person name="Raisen C."/>
            <person name="Dyer L."/>
            <person name="Leung K."/>
            <person name="Robertson L."/>
            <person name="Ambridge K."/>
            <person name="Leongamornlert D."/>
            <person name="McGuire S."/>
            <person name="Gilderthorp R."/>
            <person name="Griffiths C."/>
            <person name="Manthravadi D."/>
            <person name="Nichol S."/>
            <person name="Barker G."/>
            <person name="Whitehead S."/>
            <person name="Kay M."/>
            <person name="Brown J."/>
            <person name="Murnane C."/>
            <person name="Gray E."/>
            <person name="Humphries M."/>
            <person name="Sycamore N."/>
            <person name="Barker D."/>
            <person name="Saunders D."/>
            <person name="Wallis J."/>
            <person name="Babbage A."/>
            <person name="Hammond S."/>
            <person name="Mashreghi-Mohammadi M."/>
            <person name="Barr L."/>
            <person name="Martin S."/>
            <person name="Wray P."/>
            <person name="Ellington A."/>
            <person name="Matthews N."/>
            <person name="Ellwood M."/>
            <person name="Woodmansey R."/>
            <person name="Clark G."/>
            <person name="Cooper J."/>
            <person name="Tromans A."/>
            <person name="Grafham D."/>
            <person name="Skuce C."/>
            <person name="Pandian R."/>
            <person name="Andrews R."/>
            <person name="Harrison E."/>
            <person name="Kimberley A."/>
            <person name="Garnett J."/>
            <person name="Fosker N."/>
            <person name="Hall R."/>
            <person name="Garner P."/>
            <person name="Kelly D."/>
            <person name="Bird C."/>
            <person name="Palmer S."/>
            <person name="Gehring I."/>
            <person name="Berger A."/>
            <person name="Dooley C.M."/>
            <person name="Ersan-Urun Z."/>
            <person name="Eser C."/>
            <person name="Geiger H."/>
            <person name="Geisler M."/>
            <person name="Karotki L."/>
            <person name="Kirn A."/>
            <person name="Konantz J."/>
            <person name="Konantz M."/>
            <person name="Oberlander M."/>
            <person name="Rudolph-Geiger S."/>
            <person name="Teucke M."/>
            <person name="Lanz C."/>
            <person name="Raddatz G."/>
            <person name="Osoegawa K."/>
            <person name="Zhu B."/>
            <person name="Rapp A."/>
            <person name="Widaa S."/>
            <person name="Langford C."/>
            <person name="Yang F."/>
            <person name="Schuster S.C."/>
            <person name="Carter N.P."/>
            <person name="Harrow J."/>
            <person name="Ning Z."/>
            <person name="Herrero J."/>
            <person name="Searle S.M."/>
            <person name="Enright A."/>
            <person name="Geisler R."/>
            <person name="Plasterk R.H."/>
            <person name="Lee C."/>
            <person name="Westerfield M."/>
            <person name="de Jong P.J."/>
            <person name="Zon L.I."/>
            <person name="Postlethwait J.H."/>
            <person name="Nusslein-Volhard C."/>
            <person name="Hubbard T.J."/>
            <person name="Roest Crollius H."/>
            <person name="Rogers J."/>
            <person name="Stemple D.L."/>
        </authorList>
    </citation>
    <scope>NUCLEOTIDE SEQUENCE [LARGE SCALE GENOMIC DNA]</scope>
    <source>
        <strain>Tuebingen</strain>
    </source>
</reference>
<dbReference type="EMBL" id="CR847941">
    <property type="protein sequence ID" value="CAN87842.1"/>
    <property type="molecule type" value="Genomic_DNA"/>
</dbReference>
<dbReference type="EMBL" id="CR847941">
    <property type="protein sequence ID" value="CAN87843.1"/>
    <property type="status" value="ALT_SEQ"/>
    <property type="molecule type" value="Genomic_DNA"/>
</dbReference>
<dbReference type="RefSeq" id="NP_001119948.1">
    <property type="nucleotide sequence ID" value="NM_001126476.1"/>
</dbReference>
<dbReference type="SMR" id="A5WUX7"/>
<dbReference type="FunCoup" id="A5WUX7">
    <property type="interactions" value="466"/>
</dbReference>
<dbReference type="STRING" id="7955.ENSDARP00000129767"/>
<dbReference type="PaxDb" id="7955-ENSDARP00000129767"/>
<dbReference type="Ensembl" id="ENSDART00000154507">
    <property type="protein sequence ID" value="ENSDARP00000129767"/>
    <property type="gene ID" value="ENSDARG00000097803"/>
</dbReference>
<dbReference type="GeneID" id="100004874"/>
<dbReference type="KEGG" id="dre:100004874"/>
<dbReference type="AGR" id="ZFIN:ZDB-GENE-130109-1"/>
<dbReference type="CTD" id="91574"/>
<dbReference type="ZFIN" id="ZDB-GENE-130109-1">
    <property type="gene designation" value="mtrfr"/>
</dbReference>
<dbReference type="eggNOG" id="KOG2726">
    <property type="taxonomic scope" value="Eukaryota"/>
</dbReference>
<dbReference type="InParanoid" id="A5WUX7"/>
<dbReference type="OMA" id="SWTRWIL"/>
<dbReference type="PhylomeDB" id="A5WUX7"/>
<dbReference type="PRO" id="PR:A5WUX7"/>
<dbReference type="Proteomes" id="UP000000437">
    <property type="component" value="Alternate scaffold 5"/>
</dbReference>
<dbReference type="Proteomes" id="UP000000437">
    <property type="component" value="Chromosome 5"/>
</dbReference>
<dbReference type="Bgee" id="ENSDARG00000097803">
    <property type="expression patterns" value="Expressed in testis and 21 other cell types or tissues"/>
</dbReference>
<dbReference type="ExpressionAtlas" id="A5WUX7">
    <property type="expression patterns" value="baseline"/>
</dbReference>
<dbReference type="GO" id="GO:0005739">
    <property type="term" value="C:mitochondrion"/>
    <property type="evidence" value="ECO:0000250"/>
    <property type="project" value="UniProtKB"/>
</dbReference>
<dbReference type="GO" id="GO:0043023">
    <property type="term" value="F:ribosomal large subunit binding"/>
    <property type="evidence" value="ECO:0000250"/>
    <property type="project" value="UniProtKB"/>
</dbReference>
<dbReference type="GO" id="GO:0003747">
    <property type="term" value="F:translation release factor activity"/>
    <property type="evidence" value="ECO:0007669"/>
    <property type="project" value="InterPro"/>
</dbReference>
<dbReference type="GO" id="GO:0000049">
    <property type="term" value="F:tRNA binding"/>
    <property type="evidence" value="ECO:0000250"/>
    <property type="project" value="UniProtKB"/>
</dbReference>
<dbReference type="GO" id="GO:0072344">
    <property type="term" value="P:rescue of stalled ribosome"/>
    <property type="evidence" value="ECO:0000250"/>
    <property type="project" value="UniProtKB"/>
</dbReference>
<dbReference type="FunFam" id="3.30.160.20:FF:000054">
    <property type="entry name" value="Chromosome 12 open reading frame 65"/>
    <property type="match status" value="1"/>
</dbReference>
<dbReference type="Gene3D" id="3.30.160.20">
    <property type="match status" value="1"/>
</dbReference>
<dbReference type="InterPro" id="IPR052405">
    <property type="entry name" value="Mito_Transl_Release_Factor"/>
</dbReference>
<dbReference type="InterPro" id="IPR000352">
    <property type="entry name" value="Pep_chain_release_fac_I"/>
</dbReference>
<dbReference type="InterPro" id="IPR045853">
    <property type="entry name" value="Pep_chain_release_fac_I_sf"/>
</dbReference>
<dbReference type="PANTHER" id="PTHR46203:SF1">
    <property type="entry name" value="MITOCHONDRIAL TRANSLATION RELEASE FACTOR IN RESCUE"/>
    <property type="match status" value="1"/>
</dbReference>
<dbReference type="PANTHER" id="PTHR46203">
    <property type="entry name" value="PROBABLE PEPTIDE CHAIN RELEASE FACTOR C12ORF65"/>
    <property type="match status" value="1"/>
</dbReference>
<dbReference type="Pfam" id="PF00472">
    <property type="entry name" value="RF-1"/>
    <property type="match status" value="1"/>
</dbReference>
<dbReference type="SUPFAM" id="SSF75620">
    <property type="entry name" value="Release factor"/>
    <property type="match status" value="1"/>
</dbReference>
<organism>
    <name type="scientific">Danio rerio</name>
    <name type="common">Zebrafish</name>
    <name type="synonym">Brachydanio rerio</name>
    <dbReference type="NCBI Taxonomy" id="7955"/>
    <lineage>
        <taxon>Eukaryota</taxon>
        <taxon>Metazoa</taxon>
        <taxon>Chordata</taxon>
        <taxon>Craniata</taxon>
        <taxon>Vertebrata</taxon>
        <taxon>Euteleostomi</taxon>
        <taxon>Actinopterygii</taxon>
        <taxon>Neopterygii</taxon>
        <taxon>Teleostei</taxon>
        <taxon>Ostariophysi</taxon>
        <taxon>Cypriniformes</taxon>
        <taxon>Danionidae</taxon>
        <taxon>Danioninae</taxon>
        <taxon>Danio</taxon>
    </lineage>
</organism>
<evidence type="ECO:0000250" key="1">
    <source>
        <dbReference type="UniProtKB" id="Q80VP5"/>
    </source>
</evidence>
<evidence type="ECO:0000250" key="2">
    <source>
        <dbReference type="UniProtKB" id="Q9H3J6"/>
    </source>
</evidence>
<evidence type="ECO:0000255" key="3"/>
<evidence type="ECO:0000256" key="4">
    <source>
        <dbReference type="SAM" id="MobiDB-lite"/>
    </source>
</evidence>
<evidence type="ECO:0000305" key="5"/>
<comment type="function">
    <text evidence="2">Part of a mitoribosome-associated quality control pathway that prevents aberrant translation by responding to interruptions during elongation. As heterodimer with MTRES1, ejects the unfinished nascent chain and peptidyl transfer RNA (tRNA), respectively, from stalled ribosomes. Recruitment of mitoribosome biogenesis factors to these quality control intermediates suggests additional roles for MTRES1 and MTRF during mitoribosome rescue.</text>
</comment>
<comment type="subunit">
    <text evidence="2">Interacts (via C-terminus) with MTRES1 (via S4 domain). Associates with mitoribosomal S39 large subunit, peptidyl tRNA and nascent chain.</text>
</comment>
<comment type="subcellular location">
    <subcellularLocation>
        <location evidence="2">Mitochondrion</location>
    </subcellularLocation>
</comment>
<comment type="domain">
    <text evidence="2">The GGQ domain interactS with the peptidyltransferase center (PTC) of the large ribosomal subunit to trigger nascent chain hydrolysis.</text>
</comment>
<comment type="similarity">
    <text evidence="5">Belongs to the prokaryotic/mitochondrial release factor family.</text>
</comment>
<comment type="caution">
    <text evidence="5">In contrast to other members of the family, lacks the regions that come into close contact with the mRNA in the ribosomal A-site and determine the STOP codon specificity, suggesting a loss of codon specificity for translation release factor activity.</text>
</comment>
<comment type="sequence caution" evidence="5">
    <conflict type="erroneous gene model prediction">
        <sequence resource="EMBL-CDS" id="CAN87843"/>
    </conflict>
</comment>
<name>MTRFR_DANRE</name>
<feature type="transit peptide" description="Mitochondrion" evidence="3">
    <location>
        <begin position="1"/>
        <end status="unknown"/>
    </location>
</feature>
<feature type="chain" id="PRO_0000311837" description="Mitochondrial translation release factor in rescue">
    <location>
        <begin status="unknown"/>
        <end position="156"/>
    </location>
</feature>
<feature type="region of interest" description="GGQ domain" evidence="1">
    <location>
        <begin position="44"/>
        <end position="108"/>
    </location>
</feature>
<feature type="region of interest" description="Disordered" evidence="4">
    <location>
        <begin position="114"/>
        <end position="156"/>
    </location>
</feature>
<feature type="coiled-coil region" evidence="3">
    <location>
        <begin position="100"/>
        <end position="141"/>
    </location>
</feature>
<feature type="short sequence motif" description="GGQ" evidence="2">
    <location>
        <begin position="58"/>
        <end position="60"/>
    </location>
</feature>
<feature type="compositionally biased region" description="Basic and acidic residues" evidence="4">
    <location>
        <begin position="114"/>
        <end position="125"/>
    </location>
</feature>
<feature type="compositionally biased region" description="Basic and acidic residues" evidence="4">
    <location>
        <begin position="132"/>
        <end position="156"/>
    </location>
</feature>
<keyword id="KW-0175">Coiled coil</keyword>
<keyword id="KW-0488">Methylation</keyword>
<keyword id="KW-0496">Mitochondrion</keyword>
<keyword id="KW-0648">Protein biosynthesis</keyword>
<keyword id="KW-1185">Reference proteome</keyword>
<keyword id="KW-0809">Transit peptide</keyword>